<protein>
    <recommendedName>
        <fullName evidence="6">Cullin-5</fullName>
        <shortName evidence="6">CUL-5</shortName>
    </recommendedName>
</protein>
<feature type="chain" id="PRO_0000119799" description="Cullin-5">
    <location>
        <begin position="1"/>
        <end position="780"/>
    </location>
</feature>
<feature type="domain" description="Cullin neddylation" evidence="4">
    <location>
        <begin position="711"/>
        <end position="772"/>
    </location>
</feature>
<feature type="modified residue" description="Phosphoserine" evidence="2">
    <location>
        <position position="34"/>
    </location>
</feature>
<feature type="modified residue" description="Phosphothreonine" evidence="2">
    <location>
        <position position="210"/>
    </location>
</feature>
<feature type="cross-link" description="Glycyl lysine isopeptide (Lys-Gly) (interchain with G-Cter in NEDD8)" evidence="1">
    <location>
        <position position="724"/>
    </location>
</feature>
<keyword id="KW-1017">Isopeptide bond</keyword>
<keyword id="KW-0539">Nucleus</keyword>
<keyword id="KW-0597">Phosphoprotein</keyword>
<keyword id="KW-1185">Reference proteome</keyword>
<keyword id="KW-0832">Ubl conjugation</keyword>
<keyword id="KW-0833">Ubl conjugation pathway</keyword>
<sequence length="780" mass="90954">MATSNLLKNKGSLQFEDKWDFMRPIVLKLLRQESVTKQQWFDLFSDVHAVCLWDDKGPAKIHQALKEDILEFIKQAQARVLSHQDDTALLKAYIVEWRKFFTQCDILPKPFCQLEITLMGKQGSNKKSNVEDSIVRKLMLDTWNESIFSNIKNRLQDSAMKLVHAERLGEAFDSQLVIGVRESYVNLCSNPEDKLQIYRDNFEKAYLDSTERFYRTQAPSYLQQNGVQNYMKYADAKLKEEEKRALRYLETRRECNSVEALMECCVNALVTSFKETILAECQGMIKRNETEKLHLMFSLMDKVPNGIEPMLKDLEEHIISAGLADMVAAAETITTDSEKYVEQLLTLFNRFSKLVKEAFQDDPRFLTARDKAYKAVVNDATIFKLELPLKQKGVGLKTQPESKCPELLAIYCDMLLRKTPLSKKLTSEEIEAKLKEVLLVLKYVQNKDVFMRYHKAHLTRRLILDISADSEIEENMVEWLREVGMPADYVNKLARMFQDIKVSEDLNQAFKEMHKNNKLALPADSVNIKILNAGAWSRSSEKVFVSLPTELEDLIPEVEEFYKKNHSGRKLHWHHLMSNGIITFKNEVGQYDLEVTTFQLAVLFAWNQRPREKISFENLKLATELPDAELRRTLWSLVAFPKLKRQVLLYEPQVNSPKDFTEGTLFSVNQEFSLIKNAKVQKRGKINLIGRLQLTTERMREEENEGIVQLRILRTQEAIIQIMKMRKKISNAQLQTELVEILKNMFLPQKKMIKEQIEWLIEHKYIRRDESDINTFIYMA</sequence>
<gene>
    <name evidence="2" type="primary">CUL5</name>
</gene>
<reference key="1">
    <citation type="submission" date="2004-11" db="EMBL/GenBank/DDBJ databases">
        <authorList>
            <consortium name="The German cDNA consortium"/>
        </authorList>
    </citation>
    <scope>NUCLEOTIDE SEQUENCE [LARGE SCALE MRNA]</scope>
    <source>
        <tissue>Kidney</tissue>
    </source>
</reference>
<organism>
    <name type="scientific">Pongo abelii</name>
    <name type="common">Sumatran orangutan</name>
    <name type="synonym">Pongo pygmaeus abelii</name>
    <dbReference type="NCBI Taxonomy" id="9601"/>
    <lineage>
        <taxon>Eukaryota</taxon>
        <taxon>Metazoa</taxon>
        <taxon>Chordata</taxon>
        <taxon>Craniata</taxon>
        <taxon>Vertebrata</taxon>
        <taxon>Euteleostomi</taxon>
        <taxon>Mammalia</taxon>
        <taxon>Eutheria</taxon>
        <taxon>Euarchontoglires</taxon>
        <taxon>Primates</taxon>
        <taxon>Haplorrhini</taxon>
        <taxon>Catarrhini</taxon>
        <taxon>Hominidae</taxon>
        <taxon>Pongo</taxon>
    </lineage>
</organism>
<evidence type="ECO:0000250" key="1">
    <source>
        <dbReference type="UniProtKB" id="Q13616"/>
    </source>
</evidence>
<evidence type="ECO:0000250" key="2">
    <source>
        <dbReference type="UniProtKB" id="Q93034"/>
    </source>
</evidence>
<evidence type="ECO:0000250" key="3">
    <source>
        <dbReference type="UniProtKB" id="Q9D5V5"/>
    </source>
</evidence>
<evidence type="ECO:0000255" key="4"/>
<evidence type="ECO:0000255" key="5">
    <source>
        <dbReference type="PROSITE-ProRule" id="PRU00330"/>
    </source>
</evidence>
<evidence type="ECO:0000305" key="6"/>
<accession>Q5RB36</accession>
<dbReference type="EMBL" id="CR858821">
    <property type="protein sequence ID" value="CAH91024.1"/>
    <property type="molecule type" value="mRNA"/>
</dbReference>
<dbReference type="RefSeq" id="NP_001125591.1">
    <property type="nucleotide sequence ID" value="NM_001132119.1"/>
</dbReference>
<dbReference type="SMR" id="Q5RB36"/>
<dbReference type="FunCoup" id="Q5RB36">
    <property type="interactions" value="1444"/>
</dbReference>
<dbReference type="STRING" id="9601.ENSPPYP00000004398"/>
<dbReference type="GeneID" id="100172507"/>
<dbReference type="KEGG" id="pon:100172507"/>
<dbReference type="CTD" id="8065"/>
<dbReference type="eggNOG" id="KOG2285">
    <property type="taxonomic scope" value="Eukaryota"/>
</dbReference>
<dbReference type="InParanoid" id="Q5RB36"/>
<dbReference type="OrthoDB" id="27073at2759"/>
<dbReference type="UniPathway" id="UPA00143"/>
<dbReference type="Proteomes" id="UP000001595">
    <property type="component" value="Unplaced"/>
</dbReference>
<dbReference type="GO" id="GO:0031466">
    <property type="term" value="C:Cul5-RING ubiquitin ligase complex"/>
    <property type="evidence" value="ECO:0000250"/>
    <property type="project" value="UniProtKB"/>
</dbReference>
<dbReference type="GO" id="GO:0005634">
    <property type="term" value="C:nucleus"/>
    <property type="evidence" value="ECO:0007669"/>
    <property type="project" value="UniProtKB-SubCell"/>
</dbReference>
<dbReference type="GO" id="GO:0090734">
    <property type="term" value="C:site of DNA damage"/>
    <property type="evidence" value="ECO:0000250"/>
    <property type="project" value="UniProtKB"/>
</dbReference>
<dbReference type="GO" id="GO:0160072">
    <property type="term" value="F:ubiquitin ligase complex scaffold activity"/>
    <property type="evidence" value="ECO:0000250"/>
    <property type="project" value="UniProtKB"/>
</dbReference>
<dbReference type="GO" id="GO:0031625">
    <property type="term" value="F:ubiquitin protein ligase binding"/>
    <property type="evidence" value="ECO:0007669"/>
    <property type="project" value="InterPro"/>
</dbReference>
<dbReference type="GO" id="GO:0010498">
    <property type="term" value="P:proteasomal protein catabolic process"/>
    <property type="evidence" value="ECO:0007669"/>
    <property type="project" value="UniProtKB-ARBA"/>
</dbReference>
<dbReference type="GO" id="GO:0016567">
    <property type="term" value="P:protein ubiquitination"/>
    <property type="evidence" value="ECO:0007669"/>
    <property type="project" value="UniProtKB-UniPathway"/>
</dbReference>
<dbReference type="GO" id="GO:0038026">
    <property type="term" value="P:reelin-mediated signaling pathway"/>
    <property type="evidence" value="ECO:0000250"/>
    <property type="project" value="UniProtKB"/>
</dbReference>
<dbReference type="GO" id="GO:2001222">
    <property type="term" value="P:regulation of neuron migration"/>
    <property type="evidence" value="ECO:0000250"/>
    <property type="project" value="UniProtKB"/>
</dbReference>
<dbReference type="GO" id="GO:0006511">
    <property type="term" value="P:ubiquitin-dependent protein catabolic process"/>
    <property type="evidence" value="ECO:0007669"/>
    <property type="project" value="InterPro"/>
</dbReference>
<dbReference type="FunFam" id="1.10.10.10:FF:000142">
    <property type="entry name" value="Cullin 5"/>
    <property type="match status" value="1"/>
</dbReference>
<dbReference type="FunFam" id="1.20.1310.10:FF:000009">
    <property type="entry name" value="Cullin 5"/>
    <property type="match status" value="1"/>
</dbReference>
<dbReference type="FunFam" id="1.20.1310.10:FF:000014">
    <property type="entry name" value="Cullin 5"/>
    <property type="match status" value="1"/>
</dbReference>
<dbReference type="FunFam" id="1.20.1310.10:FF:000017">
    <property type="entry name" value="Cullin 5"/>
    <property type="match status" value="1"/>
</dbReference>
<dbReference type="FunFam" id="3.30.230.130:FF:000004">
    <property type="entry name" value="Cullin 5"/>
    <property type="match status" value="1"/>
</dbReference>
<dbReference type="Gene3D" id="1.20.1310.10">
    <property type="entry name" value="Cullin Repeats"/>
    <property type="match status" value="4"/>
</dbReference>
<dbReference type="Gene3D" id="3.30.230.130">
    <property type="entry name" value="Cullin, Chain C, Domain 2"/>
    <property type="match status" value="1"/>
</dbReference>
<dbReference type="Gene3D" id="1.10.10.10">
    <property type="entry name" value="Winged helix-like DNA-binding domain superfamily/Winged helix DNA-binding domain"/>
    <property type="match status" value="1"/>
</dbReference>
<dbReference type="InterPro" id="IPR045093">
    <property type="entry name" value="Cullin"/>
</dbReference>
<dbReference type="InterPro" id="IPR016157">
    <property type="entry name" value="Cullin_CS"/>
</dbReference>
<dbReference type="InterPro" id="IPR016158">
    <property type="entry name" value="Cullin_homology"/>
</dbReference>
<dbReference type="InterPro" id="IPR036317">
    <property type="entry name" value="Cullin_homology_sf"/>
</dbReference>
<dbReference type="InterPro" id="IPR001373">
    <property type="entry name" value="Cullin_N"/>
</dbReference>
<dbReference type="InterPro" id="IPR019559">
    <property type="entry name" value="Cullin_neddylation_domain"/>
</dbReference>
<dbReference type="InterPro" id="IPR016159">
    <property type="entry name" value="Cullin_repeat-like_dom_sf"/>
</dbReference>
<dbReference type="InterPro" id="IPR036388">
    <property type="entry name" value="WH-like_DNA-bd_sf"/>
</dbReference>
<dbReference type="InterPro" id="IPR036390">
    <property type="entry name" value="WH_DNA-bd_sf"/>
</dbReference>
<dbReference type="PANTHER" id="PTHR11932">
    <property type="entry name" value="CULLIN"/>
    <property type="match status" value="1"/>
</dbReference>
<dbReference type="Pfam" id="PF00888">
    <property type="entry name" value="Cullin"/>
    <property type="match status" value="1"/>
</dbReference>
<dbReference type="Pfam" id="PF10557">
    <property type="entry name" value="Cullin_Nedd8"/>
    <property type="match status" value="1"/>
</dbReference>
<dbReference type="SMART" id="SM00182">
    <property type="entry name" value="CULLIN"/>
    <property type="match status" value="1"/>
</dbReference>
<dbReference type="SMART" id="SM00884">
    <property type="entry name" value="Cullin_Nedd8"/>
    <property type="match status" value="1"/>
</dbReference>
<dbReference type="SUPFAM" id="SSF75632">
    <property type="entry name" value="Cullin homology domain"/>
    <property type="match status" value="1"/>
</dbReference>
<dbReference type="SUPFAM" id="SSF74788">
    <property type="entry name" value="Cullin repeat-like"/>
    <property type="match status" value="1"/>
</dbReference>
<dbReference type="SUPFAM" id="SSF46785">
    <property type="entry name" value="Winged helix' DNA-binding domain"/>
    <property type="match status" value="1"/>
</dbReference>
<dbReference type="PROSITE" id="PS01256">
    <property type="entry name" value="CULLIN_1"/>
    <property type="match status" value="1"/>
</dbReference>
<dbReference type="PROSITE" id="PS50069">
    <property type="entry name" value="CULLIN_2"/>
    <property type="match status" value="1"/>
</dbReference>
<proteinExistence type="evidence at transcript level"/>
<name>CUL5_PONAB</name>
<comment type="function">
    <text evidence="2 3">Core component of multiple cullin-5-RING E3 ubiquitin-protein ligase complexes (ECS complexes, also named CRL5 complexes), which mediate the ubiquitination and subsequent proteasomal degradation of target proteins. Acts a scaffold protein that contributes to catalysis through positioning of the substrate and the ubiquitin-conjugating enzyme. The functional specificity of the E3 ubiquitin-protein ligase complex depends on the variable SOCS box-containing substrate recognition component (By similarity). Acts as a key regulator of neuron positioning during cortex development: component of various SOCS-containing ECS complexes, such as the ECS(SOCS7) complex, that regulate reelin signaling by mediating ubiquitination and degradation of DAB1 (By similarity). ECS(SOCS1) seems to direct ubiquitination of JAK2. The ECS(SOCS2) complex mediates the ubiquitination and subsequent proteasomal degradation of phosphorylated EPOR and GHR. The ECS(SPSB3) complex catalyzes ubiquitination of nuclear CGAS. ECS(KLHDC1) complex is part of the DesCEND (destruction via C-end degrons) pathway and mediates ubiquitination and degradation of truncated SELENOS selenoprotein produced by failed UGA/Sec decoding, which ends with a glycine. The ECS(ASB9) complex mediates ubiquitination and degradation of CKB. As part of some ECS complex, promotes 'Lys-11'-linked ubiquitination and degradation of BTRC. As part of a multisubunit ECS complex, polyubiquitinates monoubiquitinated POLR2A. As part of the ECS(RAB40C) complex, mediates ANKRD28 ubiquitination and degradation, thereby regulating protein phosphatase 6 (PP6) complex activity and focal adhesion assembly during cell migration (By similarity). As part of the ECS(RAB40A) complex, mediates RHOU 'Lys-48'-linked ubiquitination and degradation, thus inhibiting focal adhesion disassembly during cell migration (By similarity). As part of the ECS(RAB40B) complex, mediates LIMA1/EPLIN and RAP2 ubiquitination, thereby regulating actin cytoskeleton dynamics and stress fiber formation during cell migration (By similarity). May form a cell surface vasopressin receptor (By similarity).</text>
</comment>
<comment type="pathway">
    <text evidence="2">Protein modification; protein ubiquitination.</text>
</comment>
<comment type="subunit">
    <text evidence="2 3">Component of multiple cullin-5-RING E3 ubiquitin-protein ligase complexes (ECS complexes, also named CRL5 complexes) formed of CUL5, Elongin BC (ELOB and ELOC), RNF7/RBX2 and a variable SOCS box domain-containing protein as substrate-specific recognition component. CUL5-containing ECS complexes specifically contain RNF7/RBX2, and not RBX1, as catalytic subunit. Component of the ECS(ASB2) complex with the substrate recognition component ASB2. Component of the ECS(ASB6) complex with the substrate recognition component ASB6. Component of the ECS(ASB7) complex with the substrate recognition component ASB7. Component of the ECS(ASB9) complex with the substrate recognition component ASB9. Component of the ECS(ASB11) complex with the substrate recognition component ASB11. Component of the ECS(ASB12) complex with the substrate recognition component ASB12. Component of the ECS(LRRC41) complex with the substrate recognition component LRRC41. Component of the ECS(SOCS1) complex with the substrate recognition component SOCS1. Component of the ECS(SOCS2) complex with the substrate recognition component SOCS2. Component of the ECS(WSB1) complex with the substrate recognition subunit WSB1. Component of the ECS(SOCS3) complex with the substrate recognition component SOCS3 (By similarity). Component of the ECS(SOCS7) complex with the substrate recognition component SOCS7 (By similarity). Component of the ECS(SPSB1) complex with the substrate recognition component SPSB1. Component of the ECS(SPSB3) complex with the substrate recognition component SPSB3. Component of the ECS(SPSB2) complex with the substrate recognition component SPSB2. Component of the ECS(SPSB4) complex with the substrate recognition component SPSB4. Component of the ECS(RAB40) complex with the substrate recognition subunit RAB40A, RAB40B or RAB40C. Component of the ECS(KLHDC1) complex with the substrate recognition component KLHDC1. Component of the ECS(PCMTD1) complex with the substrate recognition subunit PCMTD1. May also form complexes containing RBX1 and ELOA or VHL; additional evidence is however required to confirm this result in vivo. Interacts (when neddylated) with ARIH2; leading to activate the E3 ligase activity of ARIH2. Interacts with ERCC6; the interaction is induced by DNA damaging agents or inhibitors of RNA polymerase II elongation. Interacts with ELOA (via the BC-box). Interacts (unneddylated form) with DCUN1D1, DCUN1D2, DCUN1D3, DCUN1D4 and DCUN1D5; these interactions promote the cullin neddylation (By similarity).</text>
</comment>
<comment type="subcellular location">
    <subcellularLocation>
        <location evidence="2">Nucleus</location>
    </subcellularLocation>
    <text evidence="2">Localizes to sites of DNA damage in a UBAP2 and UBAP2L-dependent manner.</text>
</comment>
<comment type="PTM">
    <text evidence="2">Neddylated; which enhances the ubiquitination activity of ECS complexes and prevents binding of the inhibitor CAND1. Deneddylated via its interaction with the COP9 signalosome (CSN).</text>
</comment>
<comment type="similarity">
    <text evidence="5">Belongs to the cullin family.</text>
</comment>